<sequence length="433" mass="48262">MVNVVLGSQWGDEGKGKLVDLLVGKYDIVARCAGGNNAGHTIVVNGVKYDFHMLPSGLVNPNCQNLLGNGVVIHVPSFFKELETLEAKGLKNARSRLFVSSRAHLVFDFHQVTDKLRELELSGRSKDGKNIGTTGKGIGPTYSTKASRSGLRVHHLVNDQPGAWEEFVARYKRLLETRRQRYGDFEYDFEAKPAEYKKLREQLKPFVVDSVVFMHNAIEAKKKILVEGANALMLDIDFGTYPYVTSSNTGIGGVLTGLGIPPRTIDEIYGVVKAYTTRVGEGPFPTEQLNENGEKLQTIGAEFGVTTGRKRRCGWLDLVVLKYSTLINGYTSLNITKLDVLDTFKEIPVGISYSIQGKKLDLFPEDLNILGKVEVEYKVLPGWDQDITKITKYEDLPENAKKYLKYIEDFVGVPVEWVGTGPARESMLHKEIK</sequence>
<proteinExistence type="inferred from homology"/>
<name>PURA_YEAS6</name>
<protein>
    <recommendedName>
        <fullName evidence="2">Adenylosuccinate synthetase</fullName>
        <shortName evidence="2">AMPSase</shortName>
        <shortName evidence="2">AdSS</shortName>
        <ecNumber evidence="2">6.3.4.4</ecNumber>
    </recommendedName>
    <alternativeName>
        <fullName evidence="2">IMP--aspartate ligase</fullName>
    </alternativeName>
</protein>
<feature type="chain" id="PRO_0000399359" description="Adenylosuccinate synthetase">
    <location>
        <begin position="1"/>
        <end position="433"/>
    </location>
</feature>
<feature type="active site" description="Proton acceptor" evidence="2">
    <location>
        <position position="12"/>
    </location>
</feature>
<feature type="active site" description="Proton donor" evidence="2">
    <location>
        <position position="40"/>
    </location>
</feature>
<feature type="binding site" evidence="2">
    <location>
        <begin position="11"/>
        <end position="17"/>
    </location>
    <ligand>
        <name>GTP</name>
        <dbReference type="ChEBI" id="CHEBI:37565"/>
    </ligand>
</feature>
<feature type="binding site" description="in other chain" evidence="2">
    <location>
        <begin position="12"/>
        <end position="15"/>
    </location>
    <ligand>
        <name>IMP</name>
        <dbReference type="ChEBI" id="CHEBI:58053"/>
        <note>ligand shared between dimeric partners</note>
    </ligand>
</feature>
<feature type="binding site" evidence="2">
    <location>
        <position position="12"/>
    </location>
    <ligand>
        <name>Mg(2+)</name>
        <dbReference type="ChEBI" id="CHEBI:18420"/>
    </ligand>
</feature>
<feature type="binding site" description="in other chain" evidence="2">
    <location>
        <begin position="37"/>
        <end position="40"/>
    </location>
    <ligand>
        <name>IMP</name>
        <dbReference type="ChEBI" id="CHEBI:58053"/>
        <note>ligand shared between dimeric partners</note>
    </ligand>
</feature>
<feature type="binding site" evidence="2">
    <location>
        <begin position="39"/>
        <end position="41"/>
    </location>
    <ligand>
        <name>GTP</name>
        <dbReference type="ChEBI" id="CHEBI:37565"/>
    </ligand>
</feature>
<feature type="binding site" evidence="2">
    <location>
        <position position="39"/>
    </location>
    <ligand>
        <name>Mg(2+)</name>
        <dbReference type="ChEBI" id="CHEBI:18420"/>
    </ligand>
</feature>
<feature type="binding site" description="in other chain" evidence="2">
    <location>
        <position position="134"/>
    </location>
    <ligand>
        <name>IMP</name>
        <dbReference type="ChEBI" id="CHEBI:58053"/>
        <note>ligand shared between dimeric partners</note>
    </ligand>
</feature>
<feature type="binding site" evidence="2">
    <location>
        <position position="148"/>
    </location>
    <ligand>
        <name>IMP</name>
        <dbReference type="ChEBI" id="CHEBI:58053"/>
        <note>ligand shared between dimeric partners</note>
    </ligand>
</feature>
<feature type="binding site" description="in other chain" evidence="2">
    <location>
        <position position="230"/>
    </location>
    <ligand>
        <name>IMP</name>
        <dbReference type="ChEBI" id="CHEBI:58053"/>
        <note>ligand shared between dimeric partners</note>
    </ligand>
</feature>
<feature type="binding site" description="in other chain" evidence="2">
    <location>
        <position position="245"/>
    </location>
    <ligand>
        <name>IMP</name>
        <dbReference type="ChEBI" id="CHEBI:58053"/>
        <note>ligand shared between dimeric partners</note>
    </ligand>
</feature>
<feature type="binding site" evidence="2">
    <location>
        <begin position="305"/>
        <end position="311"/>
    </location>
    <ligand>
        <name>substrate</name>
    </ligand>
</feature>
<feature type="binding site" description="in other chain" evidence="2">
    <location>
        <position position="309"/>
    </location>
    <ligand>
        <name>IMP</name>
        <dbReference type="ChEBI" id="CHEBI:58053"/>
        <note>ligand shared between dimeric partners</note>
    </ligand>
</feature>
<feature type="binding site" evidence="2">
    <location>
        <position position="311"/>
    </location>
    <ligand>
        <name>GTP</name>
        <dbReference type="ChEBI" id="CHEBI:37565"/>
    </ligand>
</feature>
<feature type="binding site" evidence="2">
    <location>
        <begin position="337"/>
        <end position="339"/>
    </location>
    <ligand>
        <name>GTP</name>
        <dbReference type="ChEBI" id="CHEBI:37565"/>
    </ligand>
</feature>
<feature type="binding site" evidence="2">
    <location>
        <begin position="419"/>
        <end position="421"/>
    </location>
    <ligand>
        <name>GTP</name>
        <dbReference type="ChEBI" id="CHEBI:37565"/>
    </ligand>
</feature>
<gene>
    <name evidence="2" type="primary">ADE12</name>
    <name type="ORF">AWRI1631_141110</name>
</gene>
<organism>
    <name type="scientific">Saccharomyces cerevisiae (strain AWRI1631)</name>
    <name type="common">Baker's yeast</name>
    <dbReference type="NCBI Taxonomy" id="545124"/>
    <lineage>
        <taxon>Eukaryota</taxon>
        <taxon>Fungi</taxon>
        <taxon>Dikarya</taxon>
        <taxon>Ascomycota</taxon>
        <taxon>Saccharomycotina</taxon>
        <taxon>Saccharomycetes</taxon>
        <taxon>Saccharomycetales</taxon>
        <taxon>Saccharomycetaceae</taxon>
        <taxon>Saccharomyces</taxon>
    </lineage>
</organism>
<dbReference type="EC" id="6.3.4.4" evidence="2"/>
<dbReference type="EMBL" id="ABSV01001971">
    <property type="protein sequence ID" value="EDZ69802.1"/>
    <property type="molecule type" value="Genomic_DNA"/>
</dbReference>
<dbReference type="SMR" id="B5VQJ1"/>
<dbReference type="UniPathway" id="UPA00075">
    <property type="reaction ID" value="UER00335"/>
</dbReference>
<dbReference type="Proteomes" id="UP000008988">
    <property type="component" value="Unassembled WGS sequence"/>
</dbReference>
<dbReference type="GO" id="GO:0005737">
    <property type="term" value="C:cytoplasm"/>
    <property type="evidence" value="ECO:0007669"/>
    <property type="project" value="UniProtKB-SubCell"/>
</dbReference>
<dbReference type="GO" id="GO:0004019">
    <property type="term" value="F:adenylosuccinate synthase activity"/>
    <property type="evidence" value="ECO:0007669"/>
    <property type="project" value="UniProtKB-UniRule"/>
</dbReference>
<dbReference type="GO" id="GO:0005525">
    <property type="term" value="F:GTP binding"/>
    <property type="evidence" value="ECO:0007669"/>
    <property type="project" value="UniProtKB-UniRule"/>
</dbReference>
<dbReference type="GO" id="GO:0000287">
    <property type="term" value="F:magnesium ion binding"/>
    <property type="evidence" value="ECO:0007669"/>
    <property type="project" value="UniProtKB-UniRule"/>
</dbReference>
<dbReference type="GO" id="GO:0044208">
    <property type="term" value="P:'de novo' AMP biosynthetic process"/>
    <property type="evidence" value="ECO:0007669"/>
    <property type="project" value="UniProtKB-UniRule"/>
</dbReference>
<dbReference type="GO" id="GO:0046040">
    <property type="term" value="P:IMP metabolic process"/>
    <property type="evidence" value="ECO:0007669"/>
    <property type="project" value="TreeGrafter"/>
</dbReference>
<dbReference type="CDD" id="cd03108">
    <property type="entry name" value="AdSS"/>
    <property type="match status" value="1"/>
</dbReference>
<dbReference type="FunFam" id="3.90.170.10:FF:000001">
    <property type="entry name" value="Adenylosuccinate synthetase"/>
    <property type="match status" value="1"/>
</dbReference>
<dbReference type="FunFam" id="1.10.300.10:FF:000002">
    <property type="entry name" value="Adenylosuccinate synthetase, chloroplastic"/>
    <property type="match status" value="1"/>
</dbReference>
<dbReference type="Gene3D" id="3.40.440.10">
    <property type="entry name" value="Adenylosuccinate Synthetase, subunit A, domain 1"/>
    <property type="match status" value="1"/>
</dbReference>
<dbReference type="Gene3D" id="1.10.300.10">
    <property type="entry name" value="Adenylosuccinate Synthetase, subunit A, domain 2"/>
    <property type="match status" value="1"/>
</dbReference>
<dbReference type="Gene3D" id="3.90.170.10">
    <property type="entry name" value="Adenylosuccinate Synthetase, subunit A, domain 3"/>
    <property type="match status" value="1"/>
</dbReference>
<dbReference type="HAMAP" id="MF_00011">
    <property type="entry name" value="Adenylosucc_synth"/>
    <property type="match status" value="1"/>
</dbReference>
<dbReference type="InterPro" id="IPR018220">
    <property type="entry name" value="Adenylosuccin_syn_GTP-bd"/>
</dbReference>
<dbReference type="InterPro" id="IPR033128">
    <property type="entry name" value="Adenylosuccin_syn_Lys_AS"/>
</dbReference>
<dbReference type="InterPro" id="IPR042109">
    <property type="entry name" value="Adenylosuccinate_synth_dom1"/>
</dbReference>
<dbReference type="InterPro" id="IPR042110">
    <property type="entry name" value="Adenylosuccinate_synth_dom2"/>
</dbReference>
<dbReference type="InterPro" id="IPR042111">
    <property type="entry name" value="Adenylosuccinate_synth_dom3"/>
</dbReference>
<dbReference type="InterPro" id="IPR001114">
    <property type="entry name" value="Adenylosuccinate_synthetase"/>
</dbReference>
<dbReference type="InterPro" id="IPR027417">
    <property type="entry name" value="P-loop_NTPase"/>
</dbReference>
<dbReference type="NCBIfam" id="NF002223">
    <property type="entry name" value="PRK01117.1"/>
    <property type="match status" value="1"/>
</dbReference>
<dbReference type="NCBIfam" id="TIGR00184">
    <property type="entry name" value="purA"/>
    <property type="match status" value="1"/>
</dbReference>
<dbReference type="PANTHER" id="PTHR11846">
    <property type="entry name" value="ADENYLOSUCCINATE SYNTHETASE"/>
    <property type="match status" value="1"/>
</dbReference>
<dbReference type="PANTHER" id="PTHR11846:SF0">
    <property type="entry name" value="ADENYLOSUCCINATE SYNTHETASE"/>
    <property type="match status" value="1"/>
</dbReference>
<dbReference type="Pfam" id="PF00709">
    <property type="entry name" value="Adenylsucc_synt"/>
    <property type="match status" value="1"/>
</dbReference>
<dbReference type="SMART" id="SM00788">
    <property type="entry name" value="Adenylsucc_synt"/>
    <property type="match status" value="1"/>
</dbReference>
<dbReference type="SUPFAM" id="SSF52540">
    <property type="entry name" value="P-loop containing nucleoside triphosphate hydrolases"/>
    <property type="match status" value="1"/>
</dbReference>
<dbReference type="PROSITE" id="PS01266">
    <property type="entry name" value="ADENYLOSUCCIN_SYN_1"/>
    <property type="match status" value="1"/>
</dbReference>
<dbReference type="PROSITE" id="PS00513">
    <property type="entry name" value="ADENYLOSUCCIN_SYN_2"/>
    <property type="match status" value="1"/>
</dbReference>
<keyword id="KW-0963">Cytoplasm</keyword>
<keyword id="KW-0342">GTP-binding</keyword>
<keyword id="KW-0436">Ligase</keyword>
<keyword id="KW-0460">Magnesium</keyword>
<keyword id="KW-0479">Metal-binding</keyword>
<keyword id="KW-0547">Nucleotide-binding</keyword>
<keyword id="KW-0658">Purine biosynthesis</keyword>
<comment type="function">
    <text evidence="1">Plays an important role in the de novo pathway and in the salvage pathway of purine nucleotide biosynthesis. Catalyzes the first committed step in the biosynthesis of AMP from IMP (By similarity).</text>
</comment>
<comment type="catalytic activity">
    <reaction evidence="2">
        <text>IMP + L-aspartate + GTP = N(6)-(1,2-dicarboxyethyl)-AMP + GDP + phosphate + 2 H(+)</text>
        <dbReference type="Rhea" id="RHEA:15753"/>
        <dbReference type="ChEBI" id="CHEBI:15378"/>
        <dbReference type="ChEBI" id="CHEBI:29991"/>
        <dbReference type="ChEBI" id="CHEBI:37565"/>
        <dbReference type="ChEBI" id="CHEBI:43474"/>
        <dbReference type="ChEBI" id="CHEBI:57567"/>
        <dbReference type="ChEBI" id="CHEBI:58053"/>
        <dbReference type="ChEBI" id="CHEBI:58189"/>
        <dbReference type="EC" id="6.3.4.4"/>
    </reaction>
</comment>
<comment type="cofactor">
    <cofactor evidence="2">
        <name>Mg(2+)</name>
        <dbReference type="ChEBI" id="CHEBI:18420"/>
    </cofactor>
    <text evidence="2">Binds 1 Mg(2+) ion per subunit.</text>
</comment>
<comment type="pathway">
    <text evidence="2">Purine metabolism; AMP biosynthesis via de novo pathway; AMP from IMP: step 1/2.</text>
</comment>
<comment type="subunit">
    <text evidence="2">Homodimer.</text>
</comment>
<comment type="subcellular location">
    <subcellularLocation>
        <location evidence="2">Cytoplasm</location>
    </subcellularLocation>
</comment>
<comment type="similarity">
    <text evidence="2">Belongs to the adenylosuccinate synthetase family.</text>
</comment>
<accession>B5VQJ1</accession>
<reference key="1">
    <citation type="journal article" date="2008" name="FEMS Yeast Res.">
        <title>Comparative genome analysis of a Saccharomyces cerevisiae wine strain.</title>
        <authorList>
            <person name="Borneman A.R."/>
            <person name="Forgan A.H."/>
            <person name="Pretorius I.S."/>
            <person name="Chambers P.J."/>
        </authorList>
    </citation>
    <scope>NUCLEOTIDE SEQUENCE [LARGE SCALE GENOMIC DNA]</scope>
    <source>
        <strain>AWRI1631</strain>
    </source>
</reference>
<evidence type="ECO:0000250" key="1"/>
<evidence type="ECO:0000255" key="2">
    <source>
        <dbReference type="HAMAP-Rule" id="MF_03125"/>
    </source>
</evidence>